<protein>
    <recommendedName>
        <fullName>Core protein VP7</fullName>
    </recommendedName>
</protein>
<name>VP7_BRD</name>
<keyword id="KW-0167">Capsid protein</keyword>
<keyword id="KW-0325">Glycoprotein</keyword>
<keyword id="KW-1152">Outer capsid protein</keyword>
<keyword id="KW-0946">Virion</keyword>
<proteinExistence type="inferred from homology"/>
<comment type="function">
    <text>The VP7 protein is one of the five proteins (with VP1, VP3, VP4, and VP6) which form the inner capsid of the virus.</text>
</comment>
<comment type="subcellular location">
    <subcellularLocation>
        <location evidence="2">Virion</location>
    </subcellularLocation>
</comment>
<comment type="similarity">
    <text evidence="2">Belongs to the orbivirus VP7 family.</text>
</comment>
<reference key="1">
    <citation type="journal article" date="1992" name="J. Gen. Virol.">
        <title>Comparison of the major structural core proteins of tick-borne and Culicoides-borne orbiviruses.</title>
        <authorList>
            <person name="Moss S.R."/>
            <person name="Jones L.D."/>
            <person name="Nuttall P.A."/>
        </authorList>
    </citation>
    <scope>NUCLEOTIDE SEQUENCE [GENOMIC RNA]</scope>
</reference>
<organism>
    <name type="scientific">Broadhaven virus</name>
    <name type="common">BRD</name>
    <dbReference type="NCBI Taxonomy" id="10893"/>
    <lineage>
        <taxon>Viruses</taxon>
        <taxon>Riboviria</taxon>
        <taxon>Orthornavirae</taxon>
        <taxon>Duplornaviricota</taxon>
        <taxon>Resentoviricetes</taxon>
        <taxon>Reovirales</taxon>
        <taxon>Sedoreoviridae</taxon>
        <taxon>Orbivirus</taxon>
        <taxon>Great Island virus</taxon>
    </lineage>
</organism>
<gene>
    <name type="primary">Segment-7</name>
</gene>
<accession>P35935</accession>
<evidence type="ECO:0000255" key="1"/>
<evidence type="ECO:0000305" key="2"/>
<organismHost>
    <name type="scientific">Ixodes</name>
    <dbReference type="NCBI Taxonomy" id="6944"/>
</organismHost>
<organismHost>
    <name type="scientific">Laridae</name>
    <name type="common">gulls</name>
    <dbReference type="NCBI Taxonomy" id="8910"/>
</organismHost>
<organismHost>
    <name type="scientific">Pelecaniformes</name>
    <name type="common">Ibis, herons and pelicans</name>
    <dbReference type="NCBI Taxonomy" id="9205"/>
</organismHost>
<sequence>MDAYTARALSVLEGLAISGDPRSHRDPTTEATMSIFAMRFNSTTSRPVMGRPQRGKRGVITSTPQRCGIRDLEHHVAFVMPGYIQNPQTLAILARDEIPYTPSTFRRVQRYVSARMIIQMCERNDMLTPHYEAVTSPGVVLPAPAGGGPRCYAISATTLQIHIDPMQNEVLTPLIFPDQEDVIMAEFIWQRLANGIDNNAVMNMGTNVELLRDNAAVEGGTPFMATPRGIHVVLASYEPVNLCTIHLTCTRYWVTGPPRVVYDSMEADILAVYTYRDGFWDALRSYVLQALGMPAHHYPTRPVTEFRQNLAIAILSRLFDVYSQWRLRSTLQLRPKVLWWLAHRLQAALRAFRLGR</sequence>
<feature type="chain" id="PRO_0000222740" description="Core protein VP7">
    <location>
        <begin position="1"/>
        <end position="356"/>
    </location>
</feature>
<feature type="glycosylation site" description="N-linked (GlcNAc...) asparagine; by host" evidence="1">
    <location>
        <position position="41"/>
    </location>
</feature>
<dbReference type="EMBL" id="M87876">
    <property type="status" value="NOT_ANNOTATED_CDS"/>
    <property type="molecule type" value="Genomic_RNA"/>
</dbReference>
<dbReference type="PIR" id="JQ1939">
    <property type="entry name" value="JQ1939"/>
</dbReference>
<dbReference type="SMR" id="P35935"/>
<dbReference type="GlyCosmos" id="P35935">
    <property type="glycosylation" value="1 site, No reported glycans"/>
</dbReference>
<dbReference type="GO" id="GO:0039624">
    <property type="term" value="C:viral outer capsid"/>
    <property type="evidence" value="ECO:0007669"/>
    <property type="project" value="UniProtKB-KW"/>
</dbReference>
<dbReference type="GO" id="GO:0005198">
    <property type="term" value="F:structural molecule activity"/>
    <property type="evidence" value="ECO:0007669"/>
    <property type="project" value="InterPro"/>
</dbReference>
<dbReference type="Gene3D" id="2.60.120.170">
    <property type="match status" value="1"/>
</dbReference>
<dbReference type="Gene3D" id="1.10.250.10">
    <property type="entry name" value="Bluetongue Virus 10, subunit 1, domain 1"/>
    <property type="match status" value="1"/>
</dbReference>
<dbReference type="Gene3D" id="1.10.170.10">
    <property type="entry name" value="Bluetongue Virus 10, subunit 1, domain 3"/>
    <property type="match status" value="1"/>
</dbReference>
<dbReference type="InterPro" id="IPR001803">
    <property type="entry name" value="Orbi_VP7_capsid"/>
</dbReference>
<dbReference type="InterPro" id="IPR023178">
    <property type="entry name" value="Orbi_VP7_capsid_C"/>
</dbReference>
<dbReference type="InterPro" id="IPR023176">
    <property type="entry name" value="Orbi_VP7_capsid_N"/>
</dbReference>
<dbReference type="InterPro" id="IPR008935">
    <property type="entry name" value="Virus_capsid_a-hlx_vir"/>
</dbReference>
<dbReference type="Pfam" id="PF00897">
    <property type="entry name" value="Orbi_VP7"/>
    <property type="match status" value="1"/>
</dbReference>
<dbReference type="PRINTS" id="PR00903">
    <property type="entry name" value="VP7CAPSID"/>
</dbReference>
<dbReference type="SUPFAM" id="SSF48345">
    <property type="entry name" value="A virus capsid protein alpha-helical domain"/>
    <property type="match status" value="1"/>
</dbReference>